<protein>
    <recommendedName>
        <fullName>WD40 repeat-containing protein SMU1</fullName>
    </recommendedName>
    <alternativeName>
        <fullName>Brain-enriched WD repeat-containing protein</fullName>
    </alternativeName>
    <alternativeName>
        <fullName>Smu-1 suppressor of mec-8 and unc-52 protein homolog</fullName>
    </alternativeName>
    <component>
        <recommendedName>
            <fullName>WD40 repeat-containing protein SMU1, N-terminally processed</fullName>
        </recommendedName>
    </component>
</protein>
<gene>
    <name type="primary">Smu1</name>
    <name type="synonym">Bwd</name>
</gene>
<comment type="function">
    <text evidence="2 3">Involved in pre-mRNA splicing as a component of the spliceosome (By similarity). Regulates alternative splicing of the HSPG2 pre-mRNA (By similarity). Required for normal accumulation of IK (By similarity). Required for normal mitotic spindle assembly and normal progress through mitosis (By similarity).</text>
</comment>
<comment type="subunit">
    <text evidence="2">Component of the spliceosome B complex. Interacts with IK.</text>
</comment>
<comment type="subcellular location">
    <subcellularLocation>
        <location evidence="7">Cytoplasm</location>
    </subcellularLocation>
    <subcellularLocation>
        <location evidence="7">Nucleus</location>
    </subcellularLocation>
    <subcellularLocation>
        <location evidence="3">Nucleus speckle</location>
    </subcellularLocation>
    <text evidence="3">Colocalizes with SRSF1 in nuclear speckles.</text>
</comment>
<comment type="tissue specificity">
    <text evidence="7">Highly expressed in cerebellum, midbrain and heart. Moderately expressed in brain stem, cerebral cortex and liver. Detected in dentate gyrus, pyramidal layer of the hippocampus and Purkinje and granule neurons of cerebellum.</text>
</comment>
<comment type="domain">
    <text evidence="1">The WD repeats assemble into a seven-bladed WD propeller.</text>
</comment>
<comment type="similarity">
    <text evidence="8">Belongs to the WD repeat SMU1 family.</text>
</comment>
<reference key="1">
    <citation type="journal article" date="2001" name="Gene">
        <title>Cloning and molecular characterization of a novel gene encoding a WD-repeat protein expressed in restricted areas of adult rat brain.</title>
        <authorList>
            <person name="Di Benedetto A.J."/>
            <person name="Klick Stoddard J."/>
            <person name="Glavan B.J."/>
        </authorList>
    </citation>
    <scope>NUCLEOTIDE SEQUENCE [MRNA]</scope>
    <scope>SUBCELLULAR LOCATION</scope>
    <scope>TISSUE SPECIFICITY</scope>
</reference>
<keyword id="KW-0007">Acetylation</keyword>
<keyword id="KW-0963">Cytoplasm</keyword>
<keyword id="KW-1017">Isopeptide bond</keyword>
<keyword id="KW-0507">mRNA processing</keyword>
<keyword id="KW-0508">mRNA splicing</keyword>
<keyword id="KW-0539">Nucleus</keyword>
<keyword id="KW-1185">Reference proteome</keyword>
<keyword id="KW-0677">Repeat</keyword>
<keyword id="KW-0747">Spliceosome</keyword>
<keyword id="KW-0832">Ubl conjugation</keyword>
<keyword id="KW-0853">WD repeat</keyword>
<sequence>MSIEIESSDVIRLIMQYLKENSLHRALATFTEETTVSLNTVDSIESFVADINSGHWDTVLQAIQSLKLPDKTLIDLYEQVVLELIELRELGAARSLLRQTDPMIMLKQTQPERYIHLENLLARSYFDPREAYPDGSSKEKRRAAIAQALAGEVSVVPPSRLMALLGQALKWQQHQGLLPPGMTIDLFRGKAAVKDVEEEKFPTQLSRHIKFGQKSHVECARFSPDGQYLVTGSVDGFIEVWNFTTGKIRKDLKYQAQDNFMMMDDAVLCMCFSRDTEMLATGAQDGKIKVWKIQSGQCLRRFERAHSKGVTCLSFSKDSSQILSASFDQTIRIHGLKSGKTLKEFRGHSSFVNEATFTQDGHYIISASSDGTVKIWNMKTTECSNTFKSLGSTAGTDITVNSVILLPKNPEHFVVCNRSNTVVIMNMQGQIVRSFSSGKREGGDFVCCALSPRGEWIYCVGEDFVLYCFSTVTGKLERTLTVHEKDVIGIAHHPHQNLIATYSEDGLLKLWKP</sequence>
<accession>Q99M63</accession>
<proteinExistence type="evidence at transcript level"/>
<organism>
    <name type="scientific">Rattus norvegicus</name>
    <name type="common">Rat</name>
    <dbReference type="NCBI Taxonomy" id="10116"/>
    <lineage>
        <taxon>Eukaryota</taxon>
        <taxon>Metazoa</taxon>
        <taxon>Chordata</taxon>
        <taxon>Craniata</taxon>
        <taxon>Vertebrata</taxon>
        <taxon>Euteleostomi</taxon>
        <taxon>Mammalia</taxon>
        <taxon>Eutheria</taxon>
        <taxon>Euarchontoglires</taxon>
        <taxon>Glires</taxon>
        <taxon>Rodentia</taxon>
        <taxon>Myomorpha</taxon>
        <taxon>Muroidea</taxon>
        <taxon>Muridae</taxon>
        <taxon>Murinae</taxon>
        <taxon>Rattus</taxon>
    </lineage>
</organism>
<name>SMU1_RAT</name>
<evidence type="ECO:0000250" key="1">
    <source>
        <dbReference type="UniProtKB" id="G5EEG7"/>
    </source>
</evidence>
<evidence type="ECO:0000250" key="2">
    <source>
        <dbReference type="UniProtKB" id="Q2TAY7"/>
    </source>
</evidence>
<evidence type="ECO:0000250" key="3">
    <source>
        <dbReference type="UniProtKB" id="Q76B40"/>
    </source>
</evidence>
<evidence type="ECO:0000255" key="4"/>
<evidence type="ECO:0000255" key="5">
    <source>
        <dbReference type="PROSITE-ProRule" id="PRU00058"/>
    </source>
</evidence>
<evidence type="ECO:0000255" key="6">
    <source>
        <dbReference type="PROSITE-ProRule" id="PRU00126"/>
    </source>
</evidence>
<evidence type="ECO:0000269" key="7">
    <source>
    </source>
</evidence>
<evidence type="ECO:0000305" key="8"/>
<dbReference type="EMBL" id="AY029526">
    <property type="protein sequence ID" value="AAK33013.1"/>
    <property type="molecule type" value="mRNA"/>
</dbReference>
<dbReference type="RefSeq" id="NP_476543.1">
    <property type="nucleotide sequence ID" value="NM_057195.1"/>
</dbReference>
<dbReference type="SMR" id="Q99M63"/>
<dbReference type="FunCoup" id="Q99M63">
    <property type="interactions" value="4412"/>
</dbReference>
<dbReference type="STRING" id="10116.ENSRNOP00000010463"/>
<dbReference type="PhosphoSitePlus" id="Q99M63"/>
<dbReference type="jPOST" id="Q99M63"/>
<dbReference type="PaxDb" id="10116-ENSRNOP00000010463"/>
<dbReference type="GeneID" id="117541"/>
<dbReference type="KEGG" id="rno:117541"/>
<dbReference type="UCSC" id="RGD:620694">
    <property type="organism name" value="rat"/>
</dbReference>
<dbReference type="AGR" id="RGD:620694"/>
<dbReference type="CTD" id="55234"/>
<dbReference type="RGD" id="620694">
    <property type="gene designation" value="Smu1"/>
</dbReference>
<dbReference type="eggNOG" id="KOG0275">
    <property type="taxonomic scope" value="Eukaryota"/>
</dbReference>
<dbReference type="InParanoid" id="Q99M63"/>
<dbReference type="OrthoDB" id="6833at9989"/>
<dbReference type="PhylomeDB" id="Q99M63"/>
<dbReference type="Reactome" id="R-RNO-72163">
    <property type="pathway name" value="mRNA Splicing - Major Pathway"/>
</dbReference>
<dbReference type="PRO" id="PR:Q99M63"/>
<dbReference type="Proteomes" id="UP000002494">
    <property type="component" value="Unplaced"/>
</dbReference>
<dbReference type="GO" id="GO:0005737">
    <property type="term" value="C:cytoplasm"/>
    <property type="evidence" value="ECO:0007669"/>
    <property type="project" value="UniProtKB-SubCell"/>
</dbReference>
<dbReference type="GO" id="GO:0016607">
    <property type="term" value="C:nuclear speck"/>
    <property type="evidence" value="ECO:0000250"/>
    <property type="project" value="UniProtKB"/>
</dbReference>
<dbReference type="GO" id="GO:0005634">
    <property type="term" value="C:nucleus"/>
    <property type="evidence" value="ECO:0000250"/>
    <property type="project" value="UniProtKB"/>
</dbReference>
<dbReference type="GO" id="GO:0071011">
    <property type="term" value="C:precatalytic spliceosome"/>
    <property type="evidence" value="ECO:0000318"/>
    <property type="project" value="GO_Central"/>
</dbReference>
<dbReference type="GO" id="GO:0071005">
    <property type="term" value="C:U2-type precatalytic spliceosome"/>
    <property type="evidence" value="ECO:0000250"/>
    <property type="project" value="UniProtKB"/>
</dbReference>
<dbReference type="GO" id="GO:0000398">
    <property type="term" value="P:mRNA splicing, via spliceosome"/>
    <property type="evidence" value="ECO:0000250"/>
    <property type="project" value="UniProtKB"/>
</dbReference>
<dbReference type="GO" id="GO:0000381">
    <property type="term" value="P:regulation of alternative mRNA splicing, via spliceosome"/>
    <property type="evidence" value="ECO:0000250"/>
    <property type="project" value="UniProtKB"/>
</dbReference>
<dbReference type="GO" id="GO:0008380">
    <property type="term" value="P:RNA splicing"/>
    <property type="evidence" value="ECO:0000318"/>
    <property type="project" value="GO_Central"/>
</dbReference>
<dbReference type="CDD" id="cd00200">
    <property type="entry name" value="WD40"/>
    <property type="match status" value="1"/>
</dbReference>
<dbReference type="FunFam" id="2.130.10.10:FF:000729">
    <property type="entry name" value="SMU1, DNA replication regulator and spliceosomal factor"/>
    <property type="match status" value="1"/>
</dbReference>
<dbReference type="FunFam" id="2.130.10.10:FF:000754">
    <property type="entry name" value="SMU1, DNA replication regulator and spliceosomal factor"/>
    <property type="match status" value="1"/>
</dbReference>
<dbReference type="FunFam" id="2.130.10.10:FF:000082">
    <property type="entry name" value="WD40 repeat-containing protein SMU1"/>
    <property type="match status" value="1"/>
</dbReference>
<dbReference type="Gene3D" id="2.130.10.10">
    <property type="entry name" value="YVTN repeat-like/Quinoprotein amine dehydrogenase"/>
    <property type="match status" value="3"/>
</dbReference>
<dbReference type="InterPro" id="IPR006595">
    <property type="entry name" value="CTLH_C"/>
</dbReference>
<dbReference type="InterPro" id="IPR020472">
    <property type="entry name" value="G-protein_beta_WD-40_rep"/>
</dbReference>
<dbReference type="InterPro" id="IPR006594">
    <property type="entry name" value="LisH"/>
</dbReference>
<dbReference type="InterPro" id="IPR045184">
    <property type="entry name" value="SMU1"/>
</dbReference>
<dbReference type="InterPro" id="IPR054532">
    <property type="entry name" value="TPL_SMU1_LisH-like"/>
</dbReference>
<dbReference type="InterPro" id="IPR015943">
    <property type="entry name" value="WD40/YVTN_repeat-like_dom_sf"/>
</dbReference>
<dbReference type="InterPro" id="IPR019775">
    <property type="entry name" value="WD40_repeat_CS"/>
</dbReference>
<dbReference type="InterPro" id="IPR036322">
    <property type="entry name" value="WD40_repeat_dom_sf"/>
</dbReference>
<dbReference type="InterPro" id="IPR001680">
    <property type="entry name" value="WD40_rpt"/>
</dbReference>
<dbReference type="PANTHER" id="PTHR22848">
    <property type="entry name" value="WD40 REPEAT PROTEIN"/>
    <property type="match status" value="1"/>
</dbReference>
<dbReference type="Pfam" id="PF17814">
    <property type="entry name" value="LisH_TPL"/>
    <property type="match status" value="1"/>
</dbReference>
<dbReference type="Pfam" id="PF00400">
    <property type="entry name" value="WD40"/>
    <property type="match status" value="5"/>
</dbReference>
<dbReference type="PRINTS" id="PR00320">
    <property type="entry name" value="GPROTEINBRPT"/>
</dbReference>
<dbReference type="SMART" id="SM00668">
    <property type="entry name" value="CTLH"/>
    <property type="match status" value="1"/>
</dbReference>
<dbReference type="SMART" id="SM00667">
    <property type="entry name" value="LisH"/>
    <property type="match status" value="1"/>
</dbReference>
<dbReference type="SMART" id="SM00320">
    <property type="entry name" value="WD40"/>
    <property type="match status" value="7"/>
</dbReference>
<dbReference type="SUPFAM" id="SSF50978">
    <property type="entry name" value="WD40 repeat-like"/>
    <property type="match status" value="1"/>
</dbReference>
<dbReference type="PROSITE" id="PS50897">
    <property type="entry name" value="CTLH"/>
    <property type="match status" value="1"/>
</dbReference>
<dbReference type="PROSITE" id="PS50896">
    <property type="entry name" value="LISH"/>
    <property type="match status" value="1"/>
</dbReference>
<dbReference type="PROSITE" id="PS00678">
    <property type="entry name" value="WD_REPEATS_1"/>
    <property type="match status" value="2"/>
</dbReference>
<dbReference type="PROSITE" id="PS50082">
    <property type="entry name" value="WD_REPEATS_2"/>
    <property type="match status" value="5"/>
</dbReference>
<dbReference type="PROSITE" id="PS50294">
    <property type="entry name" value="WD_REPEATS_REGION"/>
    <property type="match status" value="1"/>
</dbReference>
<feature type="chain" id="PRO_0000424522" description="WD40 repeat-containing protein SMU1">
    <location>
        <begin position="1"/>
        <end position="513"/>
    </location>
</feature>
<feature type="initiator methionine" description="Removed; alternate" evidence="2">
    <location>
        <position position="1"/>
    </location>
</feature>
<feature type="chain" id="PRO_0000237592" description="WD40 repeat-containing protein SMU1, N-terminally processed">
    <location>
        <begin position="2"/>
        <end position="513"/>
    </location>
</feature>
<feature type="domain" description="LisH" evidence="6">
    <location>
        <begin position="6"/>
        <end position="38"/>
    </location>
</feature>
<feature type="domain" description="CTLH" evidence="5">
    <location>
        <begin position="40"/>
        <end position="92"/>
    </location>
</feature>
<feature type="repeat" description="WD 1" evidence="4">
    <location>
        <begin position="212"/>
        <end position="253"/>
    </location>
</feature>
<feature type="repeat" description="WD 2" evidence="4">
    <location>
        <begin position="262"/>
        <end position="303"/>
    </location>
</feature>
<feature type="repeat" description="WD 3" evidence="4">
    <location>
        <begin position="305"/>
        <end position="346"/>
    </location>
</feature>
<feature type="repeat" description="WD 4" evidence="4">
    <location>
        <begin position="347"/>
        <end position="386"/>
    </location>
</feature>
<feature type="repeat" description="WD 5" evidence="4">
    <location>
        <begin position="395"/>
        <end position="436"/>
    </location>
</feature>
<feature type="repeat" description="WD 6" evidence="4">
    <location>
        <begin position="440"/>
        <end position="479"/>
    </location>
</feature>
<feature type="repeat" description="WD 7" evidence="4">
    <location>
        <begin position="482"/>
        <end position="513"/>
    </location>
</feature>
<feature type="region of interest" description="Required for interaction with IK" evidence="2">
    <location>
        <begin position="2"/>
        <end position="315"/>
    </location>
</feature>
<feature type="modified residue" description="N-acetylmethionine" evidence="2">
    <location>
        <position position="1"/>
    </location>
</feature>
<feature type="modified residue" description="N-acetylserine; in WD40 repeat-containing protein SMU1, N-terminally processed" evidence="2">
    <location>
        <position position="2"/>
    </location>
</feature>
<feature type="cross-link" description="Glycyl lysine isopeptide (Lys-Gly) (interchain with G-Cter in SUMO2)" evidence="2">
    <location>
        <position position="379"/>
    </location>
</feature>